<protein>
    <recommendedName>
        <fullName evidence="2">Sulfate adenylyltransferase subunit 1</fullName>
        <ecNumber evidence="2">2.7.7.4</ecNumber>
    </recommendedName>
    <alternativeName>
        <fullName evidence="2">ATP-sulfurylase large subunit</fullName>
    </alternativeName>
    <alternativeName>
        <fullName evidence="2">Sulfate adenylate transferase</fullName>
        <shortName evidence="2">SAT</shortName>
    </alternativeName>
</protein>
<gene>
    <name evidence="2" type="primary">cysN</name>
    <name type="ordered locus">ECP_2733</name>
</gene>
<keyword id="KW-0067">ATP-binding</keyword>
<keyword id="KW-0342">GTP-binding</keyword>
<keyword id="KW-0547">Nucleotide-binding</keyword>
<keyword id="KW-0548">Nucleotidyltransferase</keyword>
<keyword id="KW-0808">Transferase</keyword>
<accession>Q0TEA7</accession>
<reference key="1">
    <citation type="journal article" date="2006" name="Mol. Microbiol.">
        <title>Role of pathogenicity island-associated integrases in the genome plasticity of uropathogenic Escherichia coli strain 536.</title>
        <authorList>
            <person name="Hochhut B."/>
            <person name="Wilde C."/>
            <person name="Balling G."/>
            <person name="Middendorf B."/>
            <person name="Dobrindt U."/>
            <person name="Brzuszkiewicz E."/>
            <person name="Gottschalk G."/>
            <person name="Carniel E."/>
            <person name="Hacker J."/>
        </authorList>
    </citation>
    <scope>NUCLEOTIDE SEQUENCE [LARGE SCALE GENOMIC DNA]</scope>
    <source>
        <strain>536 / UPEC</strain>
    </source>
</reference>
<feature type="chain" id="PRO_1000008903" description="Sulfate adenylyltransferase subunit 1">
    <location>
        <begin position="1"/>
        <end position="475"/>
    </location>
</feature>
<feature type="domain" description="tr-type G">
    <location>
        <begin position="25"/>
        <end position="239"/>
    </location>
</feature>
<feature type="region of interest" description="G1" evidence="1">
    <location>
        <begin position="34"/>
        <end position="41"/>
    </location>
</feature>
<feature type="region of interest" description="G2" evidence="1">
    <location>
        <begin position="92"/>
        <end position="96"/>
    </location>
</feature>
<feature type="region of interest" description="G3" evidence="1">
    <location>
        <begin position="113"/>
        <end position="116"/>
    </location>
</feature>
<feature type="region of interest" description="G4" evidence="1">
    <location>
        <begin position="168"/>
        <end position="171"/>
    </location>
</feature>
<feature type="region of interest" description="G5" evidence="1">
    <location>
        <begin position="206"/>
        <end position="208"/>
    </location>
</feature>
<feature type="binding site" evidence="2">
    <location>
        <begin position="34"/>
        <end position="41"/>
    </location>
    <ligand>
        <name>GTP</name>
        <dbReference type="ChEBI" id="CHEBI:37565"/>
    </ligand>
</feature>
<feature type="binding site" evidence="2">
    <location>
        <begin position="113"/>
        <end position="117"/>
    </location>
    <ligand>
        <name>GTP</name>
        <dbReference type="ChEBI" id="CHEBI:37565"/>
    </ligand>
</feature>
<feature type="binding site" evidence="2">
    <location>
        <begin position="168"/>
        <end position="171"/>
    </location>
    <ligand>
        <name>GTP</name>
        <dbReference type="ChEBI" id="CHEBI:37565"/>
    </ligand>
</feature>
<dbReference type="EC" id="2.7.7.4" evidence="2"/>
<dbReference type="EMBL" id="CP000247">
    <property type="protein sequence ID" value="ABG70722.1"/>
    <property type="molecule type" value="Genomic_DNA"/>
</dbReference>
<dbReference type="RefSeq" id="WP_001090361.1">
    <property type="nucleotide sequence ID" value="NC_008253.1"/>
</dbReference>
<dbReference type="SMR" id="Q0TEA7"/>
<dbReference type="GeneID" id="93779255"/>
<dbReference type="KEGG" id="ecp:ECP_2733"/>
<dbReference type="HOGENOM" id="CLU_007265_5_2_6"/>
<dbReference type="UniPathway" id="UPA00140">
    <property type="reaction ID" value="UER00204"/>
</dbReference>
<dbReference type="Proteomes" id="UP000009182">
    <property type="component" value="Chromosome"/>
</dbReference>
<dbReference type="GO" id="GO:0005524">
    <property type="term" value="F:ATP binding"/>
    <property type="evidence" value="ECO:0007669"/>
    <property type="project" value="UniProtKB-KW"/>
</dbReference>
<dbReference type="GO" id="GO:0005525">
    <property type="term" value="F:GTP binding"/>
    <property type="evidence" value="ECO:0007669"/>
    <property type="project" value="UniProtKB-UniRule"/>
</dbReference>
<dbReference type="GO" id="GO:0003924">
    <property type="term" value="F:GTPase activity"/>
    <property type="evidence" value="ECO:0007669"/>
    <property type="project" value="InterPro"/>
</dbReference>
<dbReference type="GO" id="GO:0004781">
    <property type="term" value="F:sulfate adenylyltransferase (ATP) activity"/>
    <property type="evidence" value="ECO:0007669"/>
    <property type="project" value="UniProtKB-UniRule"/>
</dbReference>
<dbReference type="GO" id="GO:0070814">
    <property type="term" value="P:hydrogen sulfide biosynthetic process"/>
    <property type="evidence" value="ECO:0007669"/>
    <property type="project" value="UniProtKB-UniRule"/>
</dbReference>
<dbReference type="GO" id="GO:0000103">
    <property type="term" value="P:sulfate assimilation"/>
    <property type="evidence" value="ECO:0007669"/>
    <property type="project" value="UniProtKB-UniRule"/>
</dbReference>
<dbReference type="CDD" id="cd04166">
    <property type="entry name" value="CysN_ATPS"/>
    <property type="match status" value="1"/>
</dbReference>
<dbReference type="CDD" id="cd03695">
    <property type="entry name" value="CysN_NodQ_II"/>
    <property type="match status" value="1"/>
</dbReference>
<dbReference type="CDD" id="cd04095">
    <property type="entry name" value="CysN_NoDQ_III"/>
    <property type="match status" value="1"/>
</dbReference>
<dbReference type="FunFam" id="2.40.30.10:FF:000027">
    <property type="entry name" value="Sulfate adenylyltransferase subunit 1"/>
    <property type="match status" value="1"/>
</dbReference>
<dbReference type="FunFam" id="2.40.30.10:FF:000031">
    <property type="entry name" value="Sulfate adenylyltransferase subunit 1"/>
    <property type="match status" value="1"/>
</dbReference>
<dbReference type="FunFam" id="3.40.50.300:FF:000119">
    <property type="entry name" value="Sulfate adenylyltransferase subunit 1"/>
    <property type="match status" value="1"/>
</dbReference>
<dbReference type="Gene3D" id="3.40.50.300">
    <property type="entry name" value="P-loop containing nucleotide triphosphate hydrolases"/>
    <property type="match status" value="1"/>
</dbReference>
<dbReference type="Gene3D" id="2.40.30.10">
    <property type="entry name" value="Translation factors"/>
    <property type="match status" value="2"/>
</dbReference>
<dbReference type="HAMAP" id="MF_00062">
    <property type="entry name" value="Sulf_adenylyltr_sub1"/>
    <property type="match status" value="1"/>
</dbReference>
<dbReference type="InterPro" id="IPR041757">
    <property type="entry name" value="CysN_GTP-bd"/>
</dbReference>
<dbReference type="InterPro" id="IPR044138">
    <property type="entry name" value="CysN_II"/>
</dbReference>
<dbReference type="InterPro" id="IPR044139">
    <property type="entry name" value="CysN_NoDQ_III"/>
</dbReference>
<dbReference type="InterPro" id="IPR031157">
    <property type="entry name" value="G_TR_CS"/>
</dbReference>
<dbReference type="InterPro" id="IPR054696">
    <property type="entry name" value="GTP-eEF1A_C"/>
</dbReference>
<dbReference type="InterPro" id="IPR027417">
    <property type="entry name" value="P-loop_NTPase"/>
</dbReference>
<dbReference type="InterPro" id="IPR005225">
    <property type="entry name" value="Small_GTP-bd"/>
</dbReference>
<dbReference type="InterPro" id="IPR011779">
    <property type="entry name" value="SO4_adenylTrfase_lsu"/>
</dbReference>
<dbReference type="InterPro" id="IPR000795">
    <property type="entry name" value="T_Tr_GTP-bd_dom"/>
</dbReference>
<dbReference type="InterPro" id="IPR050100">
    <property type="entry name" value="TRAFAC_GTPase_members"/>
</dbReference>
<dbReference type="InterPro" id="IPR009000">
    <property type="entry name" value="Transl_B-barrel_sf"/>
</dbReference>
<dbReference type="InterPro" id="IPR009001">
    <property type="entry name" value="Transl_elong_EF1A/Init_IF2_C"/>
</dbReference>
<dbReference type="NCBIfam" id="TIGR02034">
    <property type="entry name" value="CysN"/>
    <property type="match status" value="1"/>
</dbReference>
<dbReference type="NCBIfam" id="NF003478">
    <property type="entry name" value="PRK05124.1"/>
    <property type="match status" value="1"/>
</dbReference>
<dbReference type="NCBIfam" id="TIGR00231">
    <property type="entry name" value="small_GTP"/>
    <property type="match status" value="1"/>
</dbReference>
<dbReference type="PANTHER" id="PTHR23115">
    <property type="entry name" value="TRANSLATION FACTOR"/>
    <property type="match status" value="1"/>
</dbReference>
<dbReference type="Pfam" id="PF22594">
    <property type="entry name" value="GTP-eEF1A_C"/>
    <property type="match status" value="1"/>
</dbReference>
<dbReference type="Pfam" id="PF00009">
    <property type="entry name" value="GTP_EFTU"/>
    <property type="match status" value="1"/>
</dbReference>
<dbReference type="PRINTS" id="PR00315">
    <property type="entry name" value="ELONGATNFCT"/>
</dbReference>
<dbReference type="SUPFAM" id="SSF50465">
    <property type="entry name" value="EF-Tu/eEF-1alpha/eIF2-gamma C-terminal domain"/>
    <property type="match status" value="1"/>
</dbReference>
<dbReference type="SUPFAM" id="SSF52540">
    <property type="entry name" value="P-loop containing nucleoside triphosphate hydrolases"/>
    <property type="match status" value="1"/>
</dbReference>
<dbReference type="SUPFAM" id="SSF50447">
    <property type="entry name" value="Translation proteins"/>
    <property type="match status" value="1"/>
</dbReference>
<dbReference type="PROSITE" id="PS00301">
    <property type="entry name" value="G_TR_1"/>
    <property type="match status" value="1"/>
</dbReference>
<dbReference type="PROSITE" id="PS51722">
    <property type="entry name" value="G_TR_2"/>
    <property type="match status" value="1"/>
</dbReference>
<sequence length="475" mass="52558">MNTALAQQIANEGGVEAWMIAQQHKSLLRFLTCGSVDDGKSTLIGRLLHDTRQIYEDQLSSLHNDSKRHGTQGEKLDLALLVDGLQAEREQGITIDVAYRYFSTEKRKFIIADTPGHEQYTRNMATGASTCELAILLIDARKGVLDQTRRHSFISTLLGIKHLVVAINKMDLVDYSEETFTRIREDYLTFAGQLPGNLDIRFVPLSALEGDNVASQSESMPWYSGPTLLEVLETVEIQRVVDAQPMRFPVQYVNRPNLDFRGYAGTLASGRVEVGQRVKVLPSGVESNVARIVTFDGDREEAFAGEAITLVLTDEIDISRGDLLLAADEALPAVQSASVDVVWMAEQPLSPGQSYDIKIAGKKTRARVDGIRYQVDINNLTQREVENLPLNGIGLVDLTFDEPLVLDRYQQNPVTGGLIFIDRLSNVTVGAGMVHEPVSQATAAPSEFSAFELELNALVRRHFPHWGARDLLGDK</sequence>
<organism>
    <name type="scientific">Escherichia coli O6:K15:H31 (strain 536 / UPEC)</name>
    <dbReference type="NCBI Taxonomy" id="362663"/>
    <lineage>
        <taxon>Bacteria</taxon>
        <taxon>Pseudomonadati</taxon>
        <taxon>Pseudomonadota</taxon>
        <taxon>Gammaproteobacteria</taxon>
        <taxon>Enterobacterales</taxon>
        <taxon>Enterobacteriaceae</taxon>
        <taxon>Escherichia</taxon>
    </lineage>
</organism>
<proteinExistence type="inferred from homology"/>
<evidence type="ECO:0000250" key="1"/>
<evidence type="ECO:0000255" key="2">
    <source>
        <dbReference type="HAMAP-Rule" id="MF_00062"/>
    </source>
</evidence>
<name>CYSN_ECOL5</name>
<comment type="function">
    <text evidence="2">With CysD forms the ATP sulfurylase (ATPS) that catalyzes the adenylation of sulfate producing adenosine 5'-phosphosulfate (APS) and diphosphate, the first enzymatic step in sulfur assimilation pathway. APS synthesis involves the formation of a high-energy phosphoric-sulfuric acid anhydride bond driven by GTP hydrolysis by CysN coupled to ATP hydrolysis by CysD.</text>
</comment>
<comment type="catalytic activity">
    <reaction evidence="2">
        <text>sulfate + ATP + H(+) = adenosine 5'-phosphosulfate + diphosphate</text>
        <dbReference type="Rhea" id="RHEA:18133"/>
        <dbReference type="ChEBI" id="CHEBI:15378"/>
        <dbReference type="ChEBI" id="CHEBI:16189"/>
        <dbReference type="ChEBI" id="CHEBI:30616"/>
        <dbReference type="ChEBI" id="CHEBI:33019"/>
        <dbReference type="ChEBI" id="CHEBI:58243"/>
        <dbReference type="EC" id="2.7.7.4"/>
    </reaction>
</comment>
<comment type="pathway">
    <text evidence="2">Sulfur metabolism; hydrogen sulfide biosynthesis; sulfite from sulfate: step 1/3.</text>
</comment>
<comment type="subunit">
    <text evidence="2">Heterodimer composed of CysD, the smaller subunit, and CysN.</text>
</comment>
<comment type="similarity">
    <text evidence="2">Belongs to the TRAFAC class translation factor GTPase superfamily. Classic translation factor GTPase family. CysN/NodQ subfamily.</text>
</comment>